<proteinExistence type="inferred from homology"/>
<feature type="chain" id="PRO_0000065670" description="23S rRNA (adenosine(1067)-2'-O)-methyltransferase">
    <location>
        <begin position="1"/>
        <end position="270"/>
    </location>
</feature>
<feature type="binding site" evidence="1">
    <location>
        <position position="135"/>
    </location>
    <ligand>
        <name>S-adenosyl-L-methionine</name>
        <dbReference type="ChEBI" id="CHEBI:59789"/>
    </ligand>
</feature>
<feature type="binding site" evidence="1">
    <location>
        <position position="165"/>
    </location>
    <ligand>
        <name>S-adenosyl-L-methionine</name>
        <dbReference type="ChEBI" id="CHEBI:59789"/>
    </ligand>
</feature>
<feature type="binding site" evidence="1">
    <location>
        <position position="218"/>
    </location>
    <ligand>
        <name>S-adenosyl-L-methionine</name>
        <dbReference type="ChEBI" id="CHEBI:59789"/>
    </ligand>
</feature>
<feature type="binding site" evidence="1">
    <location>
        <position position="238"/>
    </location>
    <ligand>
        <name>S-adenosyl-L-methionine</name>
        <dbReference type="ChEBI" id="CHEBI:59789"/>
    </ligand>
</feature>
<feature type="binding site" evidence="1">
    <location>
        <position position="247"/>
    </location>
    <ligand>
        <name>S-adenosyl-L-methionine</name>
        <dbReference type="ChEBI" id="CHEBI:59789"/>
    </ligand>
</feature>
<comment type="function">
    <text evidence="1">Specifically methylates the adenosine-1067 in 23S ribosomal RNA. Confers resistance to antibiotic thiostrepton.</text>
</comment>
<comment type="catalytic activity">
    <reaction evidence="1">
        <text>adenosine(1067) in 23S rRNA + S-adenosyl-L-methionine = 2'-O-methyladenosine(1067) in 23S rRNA + S-adenosyl-L-homocysteine + H(+)</text>
        <dbReference type="Rhea" id="RHEA:43212"/>
        <dbReference type="Rhea" id="RHEA-COMP:10409"/>
        <dbReference type="Rhea" id="RHEA-COMP:10410"/>
        <dbReference type="ChEBI" id="CHEBI:15378"/>
        <dbReference type="ChEBI" id="CHEBI:57856"/>
        <dbReference type="ChEBI" id="CHEBI:59789"/>
        <dbReference type="ChEBI" id="CHEBI:74411"/>
        <dbReference type="ChEBI" id="CHEBI:74477"/>
        <dbReference type="EC" id="2.1.1.230"/>
    </reaction>
</comment>
<comment type="similarity">
    <text evidence="3">Belongs to the class IV-like SAM-binding methyltransferase superfamily. RNA methyltransferase TsnR/AvirB family.</text>
</comment>
<gene>
    <name evidence="2" type="primary">tsnR</name>
</gene>
<reference key="1">
    <citation type="journal article" date="1995" name="Gene">
        <title>The thiostrepton-resistance-encoding gene in Streptomyces laurentii is located within a cluster of ribosomal protein operons.</title>
        <authorList>
            <person name="Smith T.M."/>
            <person name="Jiang Y.F."/>
            <person name="Shipley P."/>
            <person name="Floss H.G."/>
        </authorList>
    </citation>
    <scope>NUCLEOTIDE SEQUENCE [GENOMIC DNA]</scope>
</reference>
<protein>
    <recommendedName>
        <fullName>23S rRNA (adenosine(1067)-2'-O)-methyltransferase</fullName>
        <ecNumber evidence="1">2.1.1.230</ecNumber>
    </recommendedName>
    <alternativeName>
        <fullName>23S rRNA [AM1067] 2'-O-methyltransferase</fullName>
        <shortName>23S rRNA methylase</shortName>
    </alternativeName>
    <alternativeName>
        <fullName>Thiostrepton-resistance methylase</fullName>
    </alternativeName>
    <alternativeName>
        <fullName>rRNA (adenosine-2'-O)-methyltransferase</fullName>
    </alternativeName>
</protein>
<accession>P52393</accession>
<sequence length="270" mass="28723">MANLDVIVDRSDPAVQRIVDVTKHSRSVVRTVLIEDIEPLTQSIRAGVEFTEVYGLDTVPFPGDLLAACEKRGIRVRLLSAAVANQVFKTEKKPKVFGIAKVPPAGRFADLESLSGDVVLLDGVKIVGNIGAIVRTRSALGAAGIVLVDSGLGTIADRRLIRASRGYVFSLPIVLATRDEALAFFRDGGMRPVVFEADGKLSIGELDGIDERLVLVFGSEKTGPSGEFAGVATESVSIPMNPAAESLNVSVSAGIALHRRARRNLSRPRG</sequence>
<keyword id="KW-0046">Antibiotic resistance</keyword>
<keyword id="KW-0489">Methyltransferase</keyword>
<keyword id="KW-0949">S-adenosyl-L-methionine</keyword>
<keyword id="KW-0808">Transferase</keyword>
<name>TSNR_STRLU</name>
<evidence type="ECO:0000250" key="1">
    <source>
        <dbReference type="UniProtKB" id="P18644"/>
    </source>
</evidence>
<evidence type="ECO:0000303" key="2">
    <source>
    </source>
</evidence>
<evidence type="ECO:0000305" key="3"/>
<dbReference type="EC" id="2.1.1.230" evidence="1"/>
<dbReference type="EMBL" id="L39157">
    <property type="protein sequence ID" value="AAA99931.1"/>
    <property type="molecule type" value="Genomic_DNA"/>
</dbReference>
<dbReference type="PIR" id="JC4350">
    <property type="entry name" value="JC4350"/>
</dbReference>
<dbReference type="RefSeq" id="WP_063856492.1">
    <property type="nucleotide sequence ID" value="NG_048322.1"/>
</dbReference>
<dbReference type="SMR" id="P52393"/>
<dbReference type="CARD" id="ARO:3003060">
    <property type="molecule name" value="tsnR"/>
    <property type="mechanism identifier" value="ARO:0001001"/>
    <property type="mechanism name" value="antibiotic target alteration"/>
</dbReference>
<dbReference type="GO" id="GO:0030743">
    <property type="term" value="F:23S rRNA (adenosine(1067)-2'-O)-methyltransferase activity"/>
    <property type="evidence" value="ECO:0007669"/>
    <property type="project" value="UniProtKB-EC"/>
</dbReference>
<dbReference type="GO" id="GO:0003723">
    <property type="term" value="F:RNA binding"/>
    <property type="evidence" value="ECO:0007669"/>
    <property type="project" value="InterPro"/>
</dbReference>
<dbReference type="GO" id="GO:0046677">
    <property type="term" value="P:response to antibiotic"/>
    <property type="evidence" value="ECO:0007669"/>
    <property type="project" value="UniProtKB-KW"/>
</dbReference>
<dbReference type="Gene3D" id="3.30.1330.30">
    <property type="match status" value="1"/>
</dbReference>
<dbReference type="Gene3D" id="3.40.1280.10">
    <property type="match status" value="1"/>
</dbReference>
<dbReference type="InterPro" id="IPR029028">
    <property type="entry name" value="Alpha/beta_knot_MTases"/>
</dbReference>
<dbReference type="InterPro" id="IPR029064">
    <property type="entry name" value="Ribosomal_eL30-like_sf"/>
</dbReference>
<dbReference type="InterPro" id="IPR051259">
    <property type="entry name" value="rRNA_Methyltransferase"/>
</dbReference>
<dbReference type="InterPro" id="IPR001537">
    <property type="entry name" value="SpoU_MeTrfase"/>
</dbReference>
<dbReference type="InterPro" id="IPR006795">
    <property type="entry name" value="Thiostrepton-R_Mease_TSNR_N"/>
</dbReference>
<dbReference type="InterPro" id="IPR029026">
    <property type="entry name" value="tRNA_m1G_MTases_N"/>
</dbReference>
<dbReference type="NCBIfam" id="NF000477">
    <property type="entry name" value="NshR_TsnR"/>
    <property type="match status" value="1"/>
</dbReference>
<dbReference type="PANTHER" id="PTHR43191">
    <property type="entry name" value="RRNA METHYLTRANSFERASE 3"/>
    <property type="match status" value="1"/>
</dbReference>
<dbReference type="PANTHER" id="PTHR43191:SF2">
    <property type="entry name" value="RRNA METHYLTRANSFERASE 3, MITOCHONDRIAL"/>
    <property type="match status" value="1"/>
</dbReference>
<dbReference type="Pfam" id="PF00588">
    <property type="entry name" value="SpoU_methylase"/>
    <property type="match status" value="1"/>
</dbReference>
<dbReference type="Pfam" id="PF04705">
    <property type="entry name" value="TSNR_N"/>
    <property type="match status" value="1"/>
</dbReference>
<dbReference type="SUPFAM" id="SSF75217">
    <property type="entry name" value="alpha/beta knot"/>
    <property type="match status" value="1"/>
</dbReference>
<organism>
    <name type="scientific">Streptomyces laurentii</name>
    <dbReference type="NCBI Taxonomy" id="39478"/>
    <lineage>
        <taxon>Bacteria</taxon>
        <taxon>Bacillati</taxon>
        <taxon>Actinomycetota</taxon>
        <taxon>Actinomycetes</taxon>
        <taxon>Kitasatosporales</taxon>
        <taxon>Streptomycetaceae</taxon>
        <taxon>Streptomyces</taxon>
    </lineage>
</organism>